<protein>
    <recommendedName>
        <fullName evidence="1">Glutamate-binding protein GluB</fullName>
    </recommendedName>
</protein>
<reference key="1">
    <citation type="submission" date="2002-04" db="EMBL/GenBank/DDBJ databases">
        <title>Corynebacterium efficiens gluA, gluB, gluC and gluD genes, complete CDS.</title>
        <authorList>
            <person name="Nonaka G."/>
            <person name="Kimura E."/>
            <person name="Kawahara Y."/>
            <person name="Sugimoto S."/>
        </authorList>
    </citation>
    <scope>NUCLEOTIDE SEQUENCE [GENOMIC DNA]</scope>
    <source>
        <strain>DSM 44549 / YS-314 / AJ 12310 / JCM 11189 / NBRC 100395</strain>
    </source>
</reference>
<reference key="2">
    <citation type="journal article" date="2003" name="Genome Res.">
        <title>Comparative complete genome sequence analysis of the amino acid replacements responsible for the thermostability of Corynebacterium efficiens.</title>
        <authorList>
            <person name="Nishio Y."/>
            <person name="Nakamura Y."/>
            <person name="Kawarabayasi Y."/>
            <person name="Usuda Y."/>
            <person name="Kimura E."/>
            <person name="Sugimoto S."/>
            <person name="Matsui K."/>
            <person name="Yamagishi A."/>
            <person name="Kikuchi H."/>
            <person name="Ikeo K."/>
            <person name="Gojobori T."/>
        </authorList>
    </citation>
    <scope>NUCLEOTIDE SEQUENCE [LARGE SCALE GENOMIC DNA]</scope>
    <source>
        <strain>DSM 44549 / YS-314 / AJ 12310 / JCM 11189 / NBRC 100395</strain>
    </source>
</reference>
<dbReference type="EMBL" id="AB083297">
    <property type="protein sequence ID" value="BAB88899.1"/>
    <property type="molecule type" value="Genomic_DNA"/>
</dbReference>
<dbReference type="EMBL" id="BA000035">
    <property type="protein sequence ID" value="BAC18655.1"/>
    <property type="molecule type" value="Genomic_DNA"/>
</dbReference>
<dbReference type="RefSeq" id="WP_011075640.1">
    <property type="nucleotide sequence ID" value="NC_004369.1"/>
</dbReference>
<dbReference type="SMR" id="Q8RQL6"/>
<dbReference type="STRING" id="196164.gene:10742273"/>
<dbReference type="KEGG" id="cef:CE1845"/>
<dbReference type="eggNOG" id="COG0834">
    <property type="taxonomic scope" value="Bacteria"/>
</dbReference>
<dbReference type="HOGENOM" id="CLU_019602_18_4_11"/>
<dbReference type="OrthoDB" id="9807888at2"/>
<dbReference type="Proteomes" id="UP000001409">
    <property type="component" value="Chromosome"/>
</dbReference>
<dbReference type="GO" id="GO:0005576">
    <property type="term" value="C:extracellular region"/>
    <property type="evidence" value="ECO:0007669"/>
    <property type="project" value="TreeGrafter"/>
</dbReference>
<dbReference type="GO" id="GO:0030288">
    <property type="term" value="C:outer membrane-bounded periplasmic space"/>
    <property type="evidence" value="ECO:0007669"/>
    <property type="project" value="TreeGrafter"/>
</dbReference>
<dbReference type="GO" id="GO:0005886">
    <property type="term" value="C:plasma membrane"/>
    <property type="evidence" value="ECO:0007669"/>
    <property type="project" value="UniProtKB-SubCell"/>
</dbReference>
<dbReference type="GO" id="GO:0006865">
    <property type="term" value="P:amino acid transport"/>
    <property type="evidence" value="ECO:0007669"/>
    <property type="project" value="UniProtKB-KW"/>
</dbReference>
<dbReference type="CDD" id="cd13690">
    <property type="entry name" value="PBP2_GluB"/>
    <property type="match status" value="1"/>
</dbReference>
<dbReference type="Gene3D" id="3.40.190.10">
    <property type="entry name" value="Periplasmic binding protein-like II"/>
    <property type="match status" value="2"/>
</dbReference>
<dbReference type="InterPro" id="IPR051455">
    <property type="entry name" value="Bact_solute-bind_prot3"/>
</dbReference>
<dbReference type="InterPro" id="IPR018313">
    <property type="entry name" value="SBP_3_CS"/>
</dbReference>
<dbReference type="InterPro" id="IPR001638">
    <property type="entry name" value="Solute-binding_3/MltF_N"/>
</dbReference>
<dbReference type="PANTHER" id="PTHR30085:SF6">
    <property type="entry name" value="ABC TRANSPORTER GLUTAMINE-BINDING PROTEIN GLNH"/>
    <property type="match status" value="1"/>
</dbReference>
<dbReference type="PANTHER" id="PTHR30085">
    <property type="entry name" value="AMINO ACID ABC TRANSPORTER PERMEASE"/>
    <property type="match status" value="1"/>
</dbReference>
<dbReference type="Pfam" id="PF00497">
    <property type="entry name" value="SBP_bac_3"/>
    <property type="match status" value="1"/>
</dbReference>
<dbReference type="SMART" id="SM00062">
    <property type="entry name" value="PBPb"/>
    <property type="match status" value="1"/>
</dbReference>
<dbReference type="SUPFAM" id="SSF53850">
    <property type="entry name" value="Periplasmic binding protein-like II"/>
    <property type="match status" value="1"/>
</dbReference>
<dbReference type="PROSITE" id="PS51257">
    <property type="entry name" value="PROKAR_LIPOPROTEIN"/>
    <property type="match status" value="1"/>
</dbReference>
<dbReference type="PROSITE" id="PS01039">
    <property type="entry name" value="SBP_BACTERIAL_3"/>
    <property type="match status" value="1"/>
</dbReference>
<sequence length="294" mass="31815">MSHKRMFTRLAAATSAAVLAGITLTACGDSEGGDGLLAAIENGNVTIGTKYDQPGLGLRNPDNSMSGLDVDVAQYVVNSIADDNGWDHPTVEWRETPSAQRETLIQNGEVDMIAATYSINPGRSESVNFGGPYLLTHQALLVREDDDRIQTLEDLDDGLILCSVTGSTPAQKVKDVLPGVQLQEYDTYSSCVEALSQGNVDAMTTDATILFGYAQQREGEFRVVEMEQDGEPFTNEYYGIGITKDDTEATDAINAALERMYADGSFQRFLTENLGEDSQVVQEGTPGDLSFLDE</sequence>
<organism>
    <name type="scientific">Corynebacterium efficiens (strain DSM 44549 / YS-314 / AJ 12310 / JCM 11189 / NBRC 100395)</name>
    <dbReference type="NCBI Taxonomy" id="196164"/>
    <lineage>
        <taxon>Bacteria</taxon>
        <taxon>Bacillati</taxon>
        <taxon>Actinomycetota</taxon>
        <taxon>Actinomycetes</taxon>
        <taxon>Mycobacteriales</taxon>
        <taxon>Corynebacteriaceae</taxon>
        <taxon>Corynebacterium</taxon>
    </lineage>
</organism>
<gene>
    <name evidence="3" type="primary">gluB</name>
    <name type="ordered locus">CE1845</name>
</gene>
<accession>Q8RQL6</accession>
<feature type="signal peptide" evidence="2">
    <location>
        <begin position="1"/>
        <end position="26"/>
    </location>
</feature>
<feature type="chain" id="PRO_0000031760" description="Glutamate-binding protein GluB">
    <location>
        <begin position="27"/>
        <end position="294"/>
    </location>
</feature>
<feature type="lipid moiety-binding region" description="N-palmitoyl cysteine" evidence="2">
    <location>
        <position position="27"/>
    </location>
</feature>
<feature type="lipid moiety-binding region" description="S-diacylglycerol cysteine" evidence="2">
    <location>
        <position position="27"/>
    </location>
</feature>
<proteinExistence type="inferred from homology"/>
<comment type="function">
    <text evidence="1">Part of the ABC transporter complex GluABCD involved in glutamate uptake (By similarity). Binds glutamate with a high affinity (By similarity).</text>
</comment>
<comment type="subunit">
    <text evidence="1">The complex is composed of two ATP-binding proteins (GluA), two transmembrane proteins (GluC and GluD) and a solute-binding protein (GluB).</text>
</comment>
<comment type="subcellular location">
    <subcellularLocation>
        <location evidence="2">Cell membrane</location>
        <topology evidence="2">Lipid-anchor</topology>
    </subcellularLocation>
</comment>
<comment type="similarity">
    <text evidence="4">Belongs to the bacterial solute-binding protein 3 family.</text>
</comment>
<keyword id="KW-0029">Amino-acid transport</keyword>
<keyword id="KW-1003">Cell membrane</keyword>
<keyword id="KW-0449">Lipoprotein</keyword>
<keyword id="KW-0472">Membrane</keyword>
<keyword id="KW-0564">Palmitate</keyword>
<keyword id="KW-1185">Reference proteome</keyword>
<keyword id="KW-0732">Signal</keyword>
<keyword id="KW-0813">Transport</keyword>
<evidence type="ECO:0000250" key="1">
    <source>
        <dbReference type="UniProtKB" id="P48242"/>
    </source>
</evidence>
<evidence type="ECO:0000255" key="2">
    <source>
        <dbReference type="PROSITE-ProRule" id="PRU00303"/>
    </source>
</evidence>
<evidence type="ECO:0000303" key="3">
    <source ref="1"/>
</evidence>
<evidence type="ECO:0000305" key="4"/>
<name>GLUB_COREF</name>